<comment type="function">
    <text evidence="1">Catalyzes the oxidative phosphorylation of glyceraldehyde 3-phosphate (G3P) to 1,3-bisphosphoglycerate (BPG) using the cofactor NAD. The first reaction step involves the formation of a hemiacetal intermediate between G3P and a cysteine residue, and this hemiacetal intermediate is then oxidized to a thioester, with concomitant reduction of NAD to NADH. The reduced NADH is then exchanged with the second NAD, and the thioester is attacked by a nucleophilic inorganic phosphate to produce BPG.</text>
</comment>
<comment type="catalytic activity">
    <reaction evidence="2">
        <text>D-glyceraldehyde 3-phosphate + phosphate + NAD(+) = (2R)-3-phospho-glyceroyl phosphate + NADH + H(+)</text>
        <dbReference type="Rhea" id="RHEA:10300"/>
        <dbReference type="ChEBI" id="CHEBI:15378"/>
        <dbReference type="ChEBI" id="CHEBI:43474"/>
        <dbReference type="ChEBI" id="CHEBI:57540"/>
        <dbReference type="ChEBI" id="CHEBI:57604"/>
        <dbReference type="ChEBI" id="CHEBI:57945"/>
        <dbReference type="ChEBI" id="CHEBI:59776"/>
        <dbReference type="EC" id="1.2.1.12"/>
    </reaction>
</comment>
<comment type="biophysicochemical properties">
    <temperatureDependence>
        <text evidence="3">Thermostable.</text>
    </temperatureDependence>
</comment>
<comment type="pathway">
    <text evidence="6">Carbohydrate degradation; glycolysis; pyruvate from D-glyceraldehyde 3-phosphate: step 1/5.</text>
</comment>
<comment type="subunit">
    <text evidence="3 4">Homotetramer.</text>
</comment>
<comment type="subcellular location">
    <subcellularLocation>
        <location evidence="6">Cytoplasm</location>
    </subcellularLocation>
</comment>
<comment type="similarity">
    <text evidence="6">Belongs to the glyceraldehyde-3-phosphate dehydrogenase family.</text>
</comment>
<organism>
    <name type="scientific">Thermus aquaticus</name>
    <dbReference type="NCBI Taxonomy" id="271"/>
    <lineage>
        <taxon>Bacteria</taxon>
        <taxon>Thermotogati</taxon>
        <taxon>Deinococcota</taxon>
        <taxon>Deinococci</taxon>
        <taxon>Thermales</taxon>
        <taxon>Thermaceae</taxon>
        <taxon>Thermus</taxon>
    </lineage>
</organism>
<name>G3P_THEAQ</name>
<sequence>MKVGINGFGRIGRQVFRILHSRGVEVALINDLTDNKTLAHLLKYDSIYHRFPGEVAYDDQYLYVDGKAIRATAVKDPKEIPWAEAGVGVVIESTGVFTDADKAKAHLEGGAKKVIITAPAKGEDITIVMGVNHEAYDPSRHHIISNASCTTNSLAPVMKVLEEAFGVEKALMTTVHSYTNDQRLLDLPHKDLRRARAAAINIIPTTTGAAKATALVLPSLKGRFDGMALRVPTATGSISDITALLKREVTAEEVNAALKAAAEGPLKGILAYTEDEIVLQDIVMDPHSSIVDAKLTKALGNMVKVFAWYDNEWGYANRVADLVELVLRKGV</sequence>
<evidence type="ECO:0000250" key="1">
    <source>
        <dbReference type="UniProtKB" id="P00362"/>
    </source>
</evidence>
<evidence type="ECO:0000250" key="2">
    <source>
        <dbReference type="UniProtKB" id="P09124"/>
    </source>
</evidence>
<evidence type="ECO:0000269" key="3">
    <source>
    </source>
</evidence>
<evidence type="ECO:0000269" key="4">
    <source ref="4"/>
</evidence>
<evidence type="ECO:0000303" key="5">
    <source>
    </source>
</evidence>
<evidence type="ECO:0000305" key="6"/>
<evidence type="ECO:0000305" key="7">
    <source>
    </source>
</evidence>
<evidence type="ECO:0007829" key="8">
    <source>
        <dbReference type="PDB" id="2G82"/>
    </source>
</evidence>
<accession>P00361</accession>
<feature type="chain" id="PRO_0000145710" description="Glyceraldehyde-3-phosphate dehydrogenase">
    <location>
        <begin position="1"/>
        <end position="331"/>
    </location>
</feature>
<feature type="active site" description="Nucleophile" evidence="7">
    <location>
        <position position="149"/>
    </location>
</feature>
<feature type="binding site" evidence="3 4">
    <location>
        <begin position="10"/>
        <end position="11"/>
    </location>
    <ligand>
        <name>NAD(+)</name>
        <dbReference type="ChEBI" id="CHEBI:57540"/>
    </ligand>
</feature>
<feature type="binding site" evidence="3 4">
    <location>
        <position position="31"/>
    </location>
    <ligand>
        <name>NAD(+)</name>
        <dbReference type="ChEBI" id="CHEBI:57540"/>
    </ligand>
</feature>
<feature type="binding site" evidence="4">
    <location>
        <position position="75"/>
    </location>
    <ligand>
        <name>NAD(+)</name>
        <dbReference type="ChEBI" id="CHEBI:57540"/>
    </ligand>
</feature>
<feature type="binding site" evidence="4">
    <location>
        <position position="117"/>
    </location>
    <ligand>
        <name>NAD(+)</name>
        <dbReference type="ChEBI" id="CHEBI:57540"/>
    </ligand>
</feature>
<feature type="binding site" evidence="1">
    <location>
        <begin position="148"/>
        <end position="150"/>
    </location>
    <ligand>
        <name>D-glyceraldehyde 3-phosphate</name>
        <dbReference type="ChEBI" id="CHEBI:59776"/>
    </ligand>
</feature>
<feature type="binding site" evidence="1">
    <location>
        <position position="179"/>
    </location>
    <ligand>
        <name>D-glyceraldehyde 3-phosphate</name>
        <dbReference type="ChEBI" id="CHEBI:59776"/>
    </ligand>
</feature>
<feature type="binding site" evidence="4">
    <location>
        <position position="180"/>
    </location>
    <ligand>
        <name>NAD(+)</name>
        <dbReference type="ChEBI" id="CHEBI:57540"/>
    </ligand>
</feature>
<feature type="binding site" evidence="1">
    <location>
        <position position="194"/>
    </location>
    <ligand>
        <name>D-glyceraldehyde 3-phosphate</name>
        <dbReference type="ChEBI" id="CHEBI:59776"/>
    </ligand>
</feature>
<feature type="binding site" evidence="1">
    <location>
        <begin position="207"/>
        <end position="208"/>
    </location>
    <ligand>
        <name>D-glyceraldehyde 3-phosphate</name>
        <dbReference type="ChEBI" id="CHEBI:59776"/>
    </ligand>
</feature>
<feature type="binding site" evidence="1">
    <location>
        <position position="230"/>
    </location>
    <ligand>
        <name>D-glyceraldehyde 3-phosphate</name>
        <dbReference type="ChEBI" id="CHEBI:59776"/>
    </ligand>
</feature>
<feature type="binding site" evidence="3 4">
    <location>
        <position position="311"/>
    </location>
    <ligand>
        <name>NAD(+)</name>
        <dbReference type="ChEBI" id="CHEBI:57540"/>
    </ligand>
</feature>
<feature type="site" description="Activates thiol group during catalysis" evidence="7">
    <location>
        <position position="176"/>
    </location>
</feature>
<feature type="sequence conflict" description="In Ref. 2; AA sequence." evidence="6" ref="2">
    <original>DN</original>
    <variation>ND</variation>
    <location>
        <begin position="34"/>
        <end position="35"/>
    </location>
</feature>
<feature type="sequence conflict" description="In Ref. 2; AA sequence." evidence="6" ref="2">
    <original>I</original>
    <variation>L</variation>
    <location>
        <position position="127"/>
    </location>
</feature>
<feature type="strand" evidence="8">
    <location>
        <begin position="2"/>
        <end position="6"/>
    </location>
</feature>
<feature type="helix" evidence="8">
    <location>
        <begin position="10"/>
        <end position="22"/>
    </location>
</feature>
<feature type="strand" evidence="8">
    <location>
        <begin position="26"/>
        <end position="30"/>
    </location>
</feature>
<feature type="helix" evidence="8">
    <location>
        <begin position="35"/>
        <end position="43"/>
    </location>
</feature>
<feature type="turn" evidence="8">
    <location>
        <begin position="46"/>
        <end position="48"/>
    </location>
</feature>
<feature type="strand" evidence="8">
    <location>
        <begin position="55"/>
        <end position="57"/>
    </location>
</feature>
<feature type="strand" evidence="8">
    <location>
        <begin position="59"/>
        <end position="64"/>
    </location>
</feature>
<feature type="strand" evidence="8">
    <location>
        <begin position="67"/>
        <end position="72"/>
    </location>
</feature>
<feature type="helix" evidence="8">
    <location>
        <begin position="77"/>
        <end position="79"/>
    </location>
</feature>
<feature type="turn" evidence="8">
    <location>
        <begin position="82"/>
        <end position="86"/>
    </location>
</feature>
<feature type="strand" evidence="8">
    <location>
        <begin position="87"/>
        <end position="92"/>
    </location>
</feature>
<feature type="strand" evidence="8">
    <location>
        <begin position="94"/>
        <end position="96"/>
    </location>
</feature>
<feature type="helix" evidence="8">
    <location>
        <begin position="100"/>
        <end position="103"/>
    </location>
</feature>
<feature type="helix" evidence="8">
    <location>
        <begin position="105"/>
        <end position="108"/>
    </location>
</feature>
<feature type="strand" evidence="8">
    <location>
        <begin position="112"/>
        <end position="118"/>
    </location>
</feature>
<feature type="strand" evidence="8">
    <location>
        <begin position="124"/>
        <end position="126"/>
    </location>
</feature>
<feature type="turn" evidence="8">
    <location>
        <begin position="129"/>
        <end position="131"/>
    </location>
</feature>
<feature type="helix" evidence="8">
    <location>
        <begin position="133"/>
        <end position="135"/>
    </location>
</feature>
<feature type="turn" evidence="8">
    <location>
        <begin position="138"/>
        <end position="140"/>
    </location>
</feature>
<feature type="strand" evidence="8">
    <location>
        <begin position="143"/>
        <end position="145"/>
    </location>
</feature>
<feature type="helix" evidence="8">
    <location>
        <begin position="149"/>
        <end position="164"/>
    </location>
</feature>
<feature type="strand" evidence="8">
    <location>
        <begin position="167"/>
        <end position="177"/>
    </location>
</feature>
<feature type="strand" evidence="8">
    <location>
        <begin position="182"/>
        <end position="186"/>
    </location>
</feature>
<feature type="turn" evidence="8">
    <location>
        <begin position="192"/>
        <end position="195"/>
    </location>
</feature>
<feature type="helix" evidence="8">
    <location>
        <begin position="198"/>
        <end position="200"/>
    </location>
</feature>
<feature type="strand" evidence="8">
    <location>
        <begin position="203"/>
        <end position="205"/>
    </location>
</feature>
<feature type="helix" evidence="8">
    <location>
        <begin position="209"/>
        <end position="213"/>
    </location>
</feature>
<feature type="turn" evidence="8">
    <location>
        <begin position="214"/>
        <end position="216"/>
    </location>
</feature>
<feature type="helix" evidence="8">
    <location>
        <begin position="218"/>
        <end position="220"/>
    </location>
</feature>
<feature type="strand" evidence="8">
    <location>
        <begin position="223"/>
        <end position="232"/>
    </location>
</feature>
<feature type="strand" evidence="8">
    <location>
        <begin position="237"/>
        <end position="247"/>
    </location>
</feature>
<feature type="helix" evidence="8">
    <location>
        <begin position="251"/>
        <end position="263"/>
    </location>
</feature>
<feature type="turn" evidence="8">
    <location>
        <begin position="264"/>
        <end position="269"/>
    </location>
</feature>
<feature type="strand" evidence="8">
    <location>
        <begin position="270"/>
        <end position="273"/>
    </location>
</feature>
<feature type="helix" evidence="8">
    <location>
        <begin position="279"/>
        <end position="282"/>
    </location>
</feature>
<feature type="strand" evidence="8">
    <location>
        <begin position="288"/>
        <end position="292"/>
    </location>
</feature>
<feature type="helix" evidence="8">
    <location>
        <begin position="293"/>
        <end position="295"/>
    </location>
</feature>
<feature type="strand" evidence="8">
    <location>
        <begin position="297"/>
        <end position="299"/>
    </location>
</feature>
<feature type="strand" evidence="8">
    <location>
        <begin position="302"/>
        <end position="309"/>
    </location>
</feature>
<feature type="helix" evidence="8">
    <location>
        <begin position="313"/>
        <end position="329"/>
    </location>
</feature>
<reference key="1">
    <citation type="journal article" date="1989" name="Nucleic Acids Res.">
        <title>Nucleotide sequence of the glyceraldehyde-3-phosphate dehydrogenase gene from Thermus aquaticus YT1.</title>
        <authorList>
            <person name="Hecht R.M."/>
            <person name="Garza A."/>
            <person name="Lee Y.H."/>
            <person name="Miller M.D."/>
            <person name="Pisegna M.A."/>
        </authorList>
    </citation>
    <scope>NUCLEOTIDE SEQUENCE [GENOMIC DNA]</scope>
    <source>
        <strain>ATCC 25104 / DSM 625 / JCM 10724 / NBRC 103206 / NCIMB 11243 / YT-1</strain>
    </source>
</reference>
<reference key="2">
    <citation type="journal article" date="1980" name="Eur. J. Biochem.">
        <title>D-glyceraldehyde-3-phosphate dehydrogenase. Amino-acid sequence of the enzyme from the extreme thermophile Thermus aquaticus.</title>
        <authorList>
            <person name="Hocking J.D."/>
            <person name="Harris J.I."/>
        </authorList>
    </citation>
    <scope>PROTEIN SEQUENCE</scope>
</reference>
<reference key="3">
    <citation type="journal article" date="1996" name="Biochemistry">
        <title>Determinants of enzyme thermostability observed in the molecular structure of Thermus aquaticus D-glyceraldehyde-3-phosphate dehydrogenase at 2.5-A resolution.</title>
        <authorList>
            <person name="Tanner J.J."/>
            <person name="Hecht R.M."/>
            <person name="Krause K.L."/>
        </authorList>
    </citation>
    <scope>X-RAY CRYSTALLOGRAPHY (2.5 ANGSTROMS) IN COMPLEX WITH NAD</scope>
    <scope>BIOPHYSICOCHEMICAL PROPERTIES</scope>
    <scope>SUBUNIT</scope>
</reference>
<reference key="4">
    <citation type="submission" date="2006-03" db="PDB data bank">
        <title>High resolution structures of Thermus aquaticus glyceraldehyde-3-phosphate dehydrogenase: role of 220's loop motion in catalysis.</title>
        <authorList>
            <person name="Jenkins J.L."/>
            <person name="Buencamino R."/>
            <person name="Tanner J.J."/>
        </authorList>
    </citation>
    <scope>X-RAY CRYSTALLOGRAPHY (1.65 ANGSTROMS) IN COMPLEX WITH NAD</scope>
    <scope>SUBUNIT</scope>
</reference>
<dbReference type="EC" id="1.2.1.12" evidence="2"/>
<dbReference type="EMBL" id="X16595">
    <property type="protein sequence ID" value="CAA34605.1"/>
    <property type="molecule type" value="Genomic_DNA"/>
</dbReference>
<dbReference type="PIR" id="S06930">
    <property type="entry name" value="DETWG3"/>
</dbReference>
<dbReference type="RefSeq" id="WP_053768084.1">
    <property type="nucleotide sequence ID" value="NZ_LHCI01000106.1"/>
</dbReference>
<dbReference type="PDB" id="1CER">
    <property type="method" value="X-ray"/>
    <property type="resolution" value="2.50 A"/>
    <property type="chains" value="A/B/C/D/O/P/Q/R=1-331"/>
</dbReference>
<dbReference type="PDB" id="2G82">
    <property type="method" value="X-ray"/>
    <property type="resolution" value="1.65 A"/>
    <property type="chains" value="A/B/C/D/O/P/Q/R=1-331"/>
</dbReference>
<dbReference type="PDBsum" id="1CER"/>
<dbReference type="PDBsum" id="2G82"/>
<dbReference type="SMR" id="P00361"/>
<dbReference type="UniPathway" id="UPA00109">
    <property type="reaction ID" value="UER00184"/>
</dbReference>
<dbReference type="EvolutionaryTrace" id="P00361"/>
<dbReference type="GO" id="GO:0005737">
    <property type="term" value="C:cytoplasm"/>
    <property type="evidence" value="ECO:0007669"/>
    <property type="project" value="UniProtKB-SubCell"/>
</dbReference>
<dbReference type="GO" id="GO:0004365">
    <property type="term" value="F:glyceraldehyde-3-phosphate dehydrogenase (NAD+) (phosphorylating) activity"/>
    <property type="evidence" value="ECO:0000250"/>
    <property type="project" value="UniProtKB"/>
</dbReference>
<dbReference type="GO" id="GO:0051287">
    <property type="term" value="F:NAD binding"/>
    <property type="evidence" value="ECO:0000314"/>
    <property type="project" value="UniProtKB"/>
</dbReference>
<dbReference type="GO" id="GO:0050661">
    <property type="term" value="F:NADP binding"/>
    <property type="evidence" value="ECO:0007669"/>
    <property type="project" value="InterPro"/>
</dbReference>
<dbReference type="GO" id="GO:0006006">
    <property type="term" value="P:glucose metabolic process"/>
    <property type="evidence" value="ECO:0007669"/>
    <property type="project" value="InterPro"/>
</dbReference>
<dbReference type="GO" id="GO:0006096">
    <property type="term" value="P:glycolytic process"/>
    <property type="evidence" value="ECO:0007669"/>
    <property type="project" value="UniProtKB-UniPathway"/>
</dbReference>
<dbReference type="CDD" id="cd18126">
    <property type="entry name" value="GAPDH_I_C"/>
    <property type="match status" value="1"/>
</dbReference>
<dbReference type="CDD" id="cd05214">
    <property type="entry name" value="GAPDH_I_N"/>
    <property type="match status" value="1"/>
</dbReference>
<dbReference type="FunFam" id="3.30.360.10:FF:000002">
    <property type="entry name" value="Glyceraldehyde-3-phosphate dehydrogenase"/>
    <property type="match status" value="1"/>
</dbReference>
<dbReference type="FunFam" id="3.40.50.720:FF:000001">
    <property type="entry name" value="Glyceraldehyde-3-phosphate dehydrogenase"/>
    <property type="match status" value="1"/>
</dbReference>
<dbReference type="Gene3D" id="3.30.360.10">
    <property type="entry name" value="Dihydrodipicolinate Reductase, domain 2"/>
    <property type="match status" value="1"/>
</dbReference>
<dbReference type="Gene3D" id="3.40.50.720">
    <property type="entry name" value="NAD(P)-binding Rossmann-like Domain"/>
    <property type="match status" value="1"/>
</dbReference>
<dbReference type="InterPro" id="IPR020831">
    <property type="entry name" value="GlycerAld/Erythrose_P_DH"/>
</dbReference>
<dbReference type="InterPro" id="IPR020830">
    <property type="entry name" value="GlycerAld_3-P_DH_AS"/>
</dbReference>
<dbReference type="InterPro" id="IPR020829">
    <property type="entry name" value="GlycerAld_3-P_DH_cat"/>
</dbReference>
<dbReference type="InterPro" id="IPR020828">
    <property type="entry name" value="GlycerAld_3-P_DH_NAD(P)-bd"/>
</dbReference>
<dbReference type="InterPro" id="IPR006424">
    <property type="entry name" value="Glyceraldehyde-3-P_DH_1"/>
</dbReference>
<dbReference type="InterPro" id="IPR036291">
    <property type="entry name" value="NAD(P)-bd_dom_sf"/>
</dbReference>
<dbReference type="NCBIfam" id="TIGR01534">
    <property type="entry name" value="GAPDH-I"/>
    <property type="match status" value="1"/>
</dbReference>
<dbReference type="PANTHER" id="PTHR43148">
    <property type="entry name" value="GLYCERALDEHYDE-3-PHOSPHATE DEHYDROGENASE 2"/>
    <property type="match status" value="1"/>
</dbReference>
<dbReference type="Pfam" id="PF02800">
    <property type="entry name" value="Gp_dh_C"/>
    <property type="match status" value="1"/>
</dbReference>
<dbReference type="Pfam" id="PF00044">
    <property type="entry name" value="Gp_dh_N"/>
    <property type="match status" value="1"/>
</dbReference>
<dbReference type="PIRSF" id="PIRSF000149">
    <property type="entry name" value="GAP_DH"/>
    <property type="match status" value="1"/>
</dbReference>
<dbReference type="PRINTS" id="PR00078">
    <property type="entry name" value="G3PDHDRGNASE"/>
</dbReference>
<dbReference type="SMART" id="SM00846">
    <property type="entry name" value="Gp_dh_N"/>
    <property type="match status" value="1"/>
</dbReference>
<dbReference type="SUPFAM" id="SSF55347">
    <property type="entry name" value="Glyceraldehyde-3-phosphate dehydrogenase-like, C-terminal domain"/>
    <property type="match status" value="1"/>
</dbReference>
<dbReference type="SUPFAM" id="SSF51735">
    <property type="entry name" value="NAD(P)-binding Rossmann-fold domains"/>
    <property type="match status" value="1"/>
</dbReference>
<dbReference type="PROSITE" id="PS00071">
    <property type="entry name" value="GAPDH"/>
    <property type="match status" value="1"/>
</dbReference>
<protein>
    <recommendedName>
        <fullName evidence="5">Glyceraldehyde-3-phosphate dehydrogenase</fullName>
        <shortName evidence="5">GAPDH</shortName>
        <ecNumber evidence="2">1.2.1.12</ecNumber>
    </recommendedName>
    <alternativeName>
        <fullName evidence="5">NAD-dependent glyceraldehyde-3-phosphate dehydrogenase</fullName>
    </alternativeName>
</protein>
<keyword id="KW-0002">3D-structure</keyword>
<keyword id="KW-0963">Cytoplasm</keyword>
<keyword id="KW-0903">Direct protein sequencing</keyword>
<keyword id="KW-0324">Glycolysis</keyword>
<keyword id="KW-0520">NAD</keyword>
<keyword id="KW-0547">Nucleotide-binding</keyword>
<keyword id="KW-0560">Oxidoreductase</keyword>
<gene>
    <name type="primary">gap</name>
</gene>
<proteinExistence type="evidence at protein level"/>